<gene>
    <name type="primary">mcm-5</name>
    <name type="ORF">R10E4.4</name>
</gene>
<accession>Q21902</accession>
<proteinExistence type="evidence at protein level"/>
<name>MCM5_CAEEL</name>
<protein>
    <recommendedName>
        <fullName>DNA replication licensing factor mcm-5</fullName>
        <ecNumber>3.6.4.12</ecNumber>
    </recommendedName>
</protein>
<comment type="function">
    <text evidence="1">Acts as a component of the MCM2-7 complex (MCM complex) which is the replicative helicase essential for 'once per cell cycle' DNA replication initiation and elongation in eukaryotic cells. Core component of CDC45-MCM-GINS (CMG) helicase, the molecular machine that unwinds template DNA during replication, and around which the replisome is built. The active ATPase sites in the MCM2-7 ring are formed through the interaction surfaces of two neighboring subunits such that a critical structure of a conserved arginine finger motif is provided in trans relative to the ATP-binding site of the Walker A box of the adjacent subunit. The six ATPase active sites, however, are likely to contribute differentially to the complex helicase activity.</text>
</comment>
<comment type="catalytic activity">
    <reaction evidence="1">
        <text>ATP + H2O = ADP + phosphate + H(+)</text>
        <dbReference type="Rhea" id="RHEA:13065"/>
        <dbReference type="ChEBI" id="CHEBI:15377"/>
        <dbReference type="ChEBI" id="CHEBI:15378"/>
        <dbReference type="ChEBI" id="CHEBI:30616"/>
        <dbReference type="ChEBI" id="CHEBI:43474"/>
        <dbReference type="ChEBI" id="CHEBI:456216"/>
        <dbReference type="EC" id="3.6.4.12"/>
    </reaction>
    <physiologicalReaction direction="left-to-right" evidence="1">
        <dbReference type="Rhea" id="RHEA:13066"/>
    </physiologicalReaction>
</comment>
<comment type="subunit">
    <text>Component of the mcm2-7 complex. The complex forms a toroidal hexameric ring with the proposed subunit order mcm2-mcm6-mcm4-mcm7-mcm3-mcm5 (By simililarity).</text>
</comment>
<comment type="subcellular location">
    <subcellularLocation>
        <location evidence="1">Nucleus</location>
    </subcellularLocation>
    <subcellularLocation>
        <location evidence="1">Cytoplasm</location>
        <location evidence="1">Cytosol</location>
    </subcellularLocation>
</comment>
<comment type="similarity">
    <text evidence="2">Belongs to the MCM family.</text>
</comment>
<evidence type="ECO:0000250" key="1">
    <source>
        <dbReference type="UniProtKB" id="P33992"/>
    </source>
</evidence>
<evidence type="ECO:0000305" key="2"/>
<reference key="1">
    <citation type="journal article" date="1998" name="Science">
        <title>Genome sequence of the nematode C. elegans: a platform for investigating biology.</title>
        <authorList>
            <consortium name="The C. elegans sequencing consortium"/>
        </authorList>
    </citation>
    <scope>NUCLEOTIDE SEQUENCE [LARGE SCALE GENOMIC DNA]</scope>
    <source>
        <strain>Bristol N2</strain>
    </source>
</reference>
<sequence>MSNLDNPGIYYQERFFANDGVPDTGRELIAEYRQLITQFRNFIRDFSTGGFGMIYRDQLKRNYFSHEYRLEINLNHLKNFDEDIEMKLRKFPGKVLPALEEAAKIVADEITTPRPKGEEKLHDIQVTLTLDEYPTSLRQVKSAQVSQVVKISGIIVAAAQVRSKATKVTLQCRQCKHTIPDVSIKPGLEGFALPRTCAAPQQGQMQRCPIDPYIMLPDKCECVDYQTLKLQENPEDVPHGEMPRHLQLFTERYLTDKVVPGNRVTIVGVYSIKKLIQKKGGDKSLQGIRTPYLRVLGIHMETSGPGRTNFTTFTPEEERMFKTLAQRKDAYELIAKSIAPSIYGSADIKKSIACLLFGGARKKLPDGITRRGDINVLLLGDPGTAKSQLLKFVEQVSPIGVYTSGKGSSAAGLTASVIRDPQSRSFIMEGGAMVLADGGVVCIDEFDKMREDDRVAIHEAMEQQTISIAKAGITTTLNSRCSVLAAANSVYGRWDESRGDDNIDFMPTILSRFDMIYIVKDTHDVLKDATLAKHVIEVHVNASAAKERDIAGVPKTATTDSDGVMTMFDTDGFLTIEFLKKFVTYARLNCGPRLTPQASEKLVNHYVKMRNPVVNADAFKSGKKAHNSAIPITVRQLEAIVRIAESIAKMELQQFATDKHVEEALRLFRVSTIEAAATGNLAGVEGFTSTADQEALNRIEVQMKKRFAIGTHVSEHLIVQDFVARQHYRESLVKKVIDNLVRRGDLQQKMQRKMLYRVR</sequence>
<organism>
    <name type="scientific">Caenorhabditis elegans</name>
    <dbReference type="NCBI Taxonomy" id="6239"/>
    <lineage>
        <taxon>Eukaryota</taxon>
        <taxon>Metazoa</taxon>
        <taxon>Ecdysozoa</taxon>
        <taxon>Nematoda</taxon>
        <taxon>Chromadorea</taxon>
        <taxon>Rhabditida</taxon>
        <taxon>Rhabditina</taxon>
        <taxon>Rhabditomorpha</taxon>
        <taxon>Rhabditoidea</taxon>
        <taxon>Rhabditidae</taxon>
        <taxon>Peloderinae</taxon>
        <taxon>Caenorhabditis</taxon>
    </lineage>
</organism>
<keyword id="KW-0002">3D-structure</keyword>
<keyword id="KW-0067">ATP-binding</keyword>
<keyword id="KW-0131">Cell cycle</keyword>
<keyword id="KW-0963">Cytoplasm</keyword>
<keyword id="KW-0235">DNA replication</keyword>
<keyword id="KW-0238">DNA-binding</keyword>
<keyword id="KW-0347">Helicase</keyword>
<keyword id="KW-0378">Hydrolase</keyword>
<keyword id="KW-0547">Nucleotide-binding</keyword>
<keyword id="KW-0539">Nucleus</keyword>
<keyword id="KW-1185">Reference proteome</keyword>
<dbReference type="EC" id="3.6.4.12"/>
<dbReference type="EMBL" id="Z50874">
    <property type="protein sequence ID" value="CAA90765.1"/>
    <property type="molecule type" value="Genomic_DNA"/>
</dbReference>
<dbReference type="PIR" id="T24130">
    <property type="entry name" value="T24130"/>
</dbReference>
<dbReference type="RefSeq" id="NP_497858.1">
    <property type="nucleotide sequence ID" value="NM_065457.7"/>
</dbReference>
<dbReference type="PDB" id="8OUW">
    <property type="method" value="EM"/>
    <property type="resolution" value="3.75 A"/>
    <property type="chains" value="5=1-759"/>
</dbReference>
<dbReference type="PDBsum" id="8OUW"/>
<dbReference type="EMDB" id="EMD-17204"/>
<dbReference type="SMR" id="Q21902"/>
<dbReference type="BioGRID" id="40789">
    <property type="interactions" value="15"/>
</dbReference>
<dbReference type="ComplexPortal" id="CPX-4482">
    <property type="entry name" value="MCM complex"/>
</dbReference>
<dbReference type="FunCoup" id="Q21902">
    <property type="interactions" value="2351"/>
</dbReference>
<dbReference type="STRING" id="6239.R10E4.4.2"/>
<dbReference type="PaxDb" id="6239-R10E4.4.1"/>
<dbReference type="PeptideAtlas" id="Q21902"/>
<dbReference type="EnsemblMetazoa" id="R10E4.4.1">
    <property type="protein sequence ID" value="R10E4.4.1"/>
    <property type="gene ID" value="WBGene00003157"/>
</dbReference>
<dbReference type="GeneID" id="175552"/>
<dbReference type="KEGG" id="cel:CELE_R10E4.4"/>
<dbReference type="UCSC" id="R10E4.4.1">
    <property type="organism name" value="c. elegans"/>
</dbReference>
<dbReference type="AGR" id="WB:WBGene00003157"/>
<dbReference type="CTD" id="175552"/>
<dbReference type="WormBase" id="R10E4.4">
    <property type="protein sequence ID" value="CE03558"/>
    <property type="gene ID" value="WBGene00003157"/>
    <property type="gene designation" value="mcm-5"/>
</dbReference>
<dbReference type="eggNOG" id="KOG0481">
    <property type="taxonomic scope" value="Eukaryota"/>
</dbReference>
<dbReference type="GeneTree" id="ENSGT01050000244824"/>
<dbReference type="HOGENOM" id="CLU_000995_7_2_1"/>
<dbReference type="InParanoid" id="Q21902"/>
<dbReference type="OMA" id="ITYCKTR"/>
<dbReference type="OrthoDB" id="10036721at2759"/>
<dbReference type="PhylomeDB" id="Q21902"/>
<dbReference type="Reactome" id="R-CEL-68867">
    <property type="pathway name" value="Assembly of the pre-replicative complex"/>
</dbReference>
<dbReference type="Reactome" id="R-CEL-68949">
    <property type="pathway name" value="Orc1 removal from chromatin"/>
</dbReference>
<dbReference type="Reactome" id="R-CEL-68962">
    <property type="pathway name" value="Activation of the pre-replicative complex"/>
</dbReference>
<dbReference type="Reactome" id="R-CEL-69052">
    <property type="pathway name" value="Switching of origins to a post-replicative state"/>
</dbReference>
<dbReference type="PRO" id="PR:Q21902"/>
<dbReference type="Proteomes" id="UP000001940">
    <property type="component" value="Chromosome III"/>
</dbReference>
<dbReference type="Bgee" id="WBGene00003157">
    <property type="expression patterns" value="Expressed in germ line (C elegans) and 4 other cell types or tissues"/>
</dbReference>
<dbReference type="GO" id="GO:0005829">
    <property type="term" value="C:cytosol"/>
    <property type="evidence" value="ECO:0007669"/>
    <property type="project" value="UniProtKB-SubCell"/>
</dbReference>
<dbReference type="GO" id="GO:0042555">
    <property type="term" value="C:MCM complex"/>
    <property type="evidence" value="ECO:0000318"/>
    <property type="project" value="GO_Central"/>
</dbReference>
<dbReference type="GO" id="GO:0005634">
    <property type="term" value="C:nucleus"/>
    <property type="evidence" value="ECO:0000318"/>
    <property type="project" value="GO_Central"/>
</dbReference>
<dbReference type="GO" id="GO:0005524">
    <property type="term" value="F:ATP binding"/>
    <property type="evidence" value="ECO:0007669"/>
    <property type="project" value="UniProtKB-KW"/>
</dbReference>
<dbReference type="GO" id="GO:0016887">
    <property type="term" value="F:ATP hydrolysis activity"/>
    <property type="evidence" value="ECO:0007669"/>
    <property type="project" value="RHEA"/>
</dbReference>
<dbReference type="GO" id="GO:0003688">
    <property type="term" value="F:DNA replication origin binding"/>
    <property type="evidence" value="ECO:0007669"/>
    <property type="project" value="InterPro"/>
</dbReference>
<dbReference type="GO" id="GO:0004386">
    <property type="term" value="F:helicase activity"/>
    <property type="evidence" value="ECO:0007669"/>
    <property type="project" value="UniProtKB-KW"/>
</dbReference>
<dbReference type="GO" id="GO:0003697">
    <property type="term" value="F:single-stranded DNA binding"/>
    <property type="evidence" value="ECO:0000318"/>
    <property type="project" value="GO_Central"/>
</dbReference>
<dbReference type="GO" id="GO:0006270">
    <property type="term" value="P:DNA replication initiation"/>
    <property type="evidence" value="ECO:0000318"/>
    <property type="project" value="GO_Central"/>
</dbReference>
<dbReference type="GO" id="GO:0000727">
    <property type="term" value="P:double-strand break repair via break-induced replication"/>
    <property type="evidence" value="ECO:0000318"/>
    <property type="project" value="GO_Central"/>
</dbReference>
<dbReference type="GO" id="GO:0006279">
    <property type="term" value="P:premeiotic DNA replication"/>
    <property type="evidence" value="ECO:0000303"/>
    <property type="project" value="ComplexPortal"/>
</dbReference>
<dbReference type="CDD" id="cd17756">
    <property type="entry name" value="MCM5"/>
    <property type="match status" value="1"/>
</dbReference>
<dbReference type="FunFam" id="2.20.28.10:FF:000005">
    <property type="entry name" value="DNA helicase"/>
    <property type="match status" value="1"/>
</dbReference>
<dbReference type="FunFam" id="3.30.1640.10:FF:000006">
    <property type="entry name" value="DNA helicase"/>
    <property type="match status" value="1"/>
</dbReference>
<dbReference type="FunFam" id="3.40.50.300:FF:000929">
    <property type="entry name" value="DNA helicase"/>
    <property type="match status" value="1"/>
</dbReference>
<dbReference type="Gene3D" id="2.20.28.10">
    <property type="match status" value="1"/>
</dbReference>
<dbReference type="Gene3D" id="3.30.1640.10">
    <property type="entry name" value="mini-chromosome maintenance (MCM) complex, chain A, domain 1"/>
    <property type="match status" value="1"/>
</dbReference>
<dbReference type="Gene3D" id="2.40.50.140">
    <property type="entry name" value="Nucleic acid-binding proteins"/>
    <property type="match status" value="1"/>
</dbReference>
<dbReference type="Gene3D" id="3.40.50.300">
    <property type="entry name" value="P-loop containing nucleotide triphosphate hydrolases"/>
    <property type="match status" value="1"/>
</dbReference>
<dbReference type="InterPro" id="IPR031327">
    <property type="entry name" value="MCM"/>
</dbReference>
<dbReference type="InterPro" id="IPR008048">
    <property type="entry name" value="MCM5"/>
</dbReference>
<dbReference type="InterPro" id="IPR054125">
    <property type="entry name" value="MCM5_C"/>
</dbReference>
<dbReference type="InterPro" id="IPR018525">
    <property type="entry name" value="MCM_CS"/>
</dbReference>
<dbReference type="InterPro" id="IPR001208">
    <property type="entry name" value="MCM_dom"/>
</dbReference>
<dbReference type="InterPro" id="IPR041562">
    <property type="entry name" value="MCM_lid"/>
</dbReference>
<dbReference type="InterPro" id="IPR027925">
    <property type="entry name" value="MCM_N"/>
</dbReference>
<dbReference type="InterPro" id="IPR033762">
    <property type="entry name" value="MCM_OB"/>
</dbReference>
<dbReference type="InterPro" id="IPR012340">
    <property type="entry name" value="NA-bd_OB-fold"/>
</dbReference>
<dbReference type="InterPro" id="IPR027417">
    <property type="entry name" value="P-loop_NTPase"/>
</dbReference>
<dbReference type="PANTHER" id="PTHR11630">
    <property type="entry name" value="DNA REPLICATION LICENSING FACTOR MCM FAMILY MEMBER"/>
    <property type="match status" value="1"/>
</dbReference>
<dbReference type="PANTHER" id="PTHR11630:SF42">
    <property type="entry name" value="DNA REPLICATION LICENSING FACTOR MCM5"/>
    <property type="match status" value="1"/>
</dbReference>
<dbReference type="Pfam" id="PF00493">
    <property type="entry name" value="MCM"/>
    <property type="match status" value="1"/>
</dbReference>
<dbReference type="Pfam" id="PF21933">
    <property type="entry name" value="MCM5_C"/>
    <property type="match status" value="1"/>
</dbReference>
<dbReference type="Pfam" id="PF17855">
    <property type="entry name" value="MCM_lid"/>
    <property type="match status" value="1"/>
</dbReference>
<dbReference type="Pfam" id="PF14551">
    <property type="entry name" value="MCM_N"/>
    <property type="match status" value="1"/>
</dbReference>
<dbReference type="Pfam" id="PF17207">
    <property type="entry name" value="MCM_OB"/>
    <property type="match status" value="1"/>
</dbReference>
<dbReference type="PRINTS" id="PR01657">
    <property type="entry name" value="MCMFAMILY"/>
</dbReference>
<dbReference type="PRINTS" id="PR01661">
    <property type="entry name" value="MCMPROTEIN5"/>
</dbReference>
<dbReference type="SMART" id="SM00350">
    <property type="entry name" value="MCM"/>
    <property type="match status" value="1"/>
</dbReference>
<dbReference type="SUPFAM" id="SSF50249">
    <property type="entry name" value="Nucleic acid-binding proteins"/>
    <property type="match status" value="1"/>
</dbReference>
<dbReference type="SUPFAM" id="SSF52540">
    <property type="entry name" value="P-loop containing nucleoside triphosphate hydrolases"/>
    <property type="match status" value="1"/>
</dbReference>
<dbReference type="PROSITE" id="PS00847">
    <property type="entry name" value="MCM_1"/>
    <property type="match status" value="1"/>
</dbReference>
<dbReference type="PROSITE" id="PS50051">
    <property type="entry name" value="MCM_2"/>
    <property type="match status" value="1"/>
</dbReference>
<feature type="chain" id="PRO_0000194110" description="DNA replication licensing factor mcm-5">
    <location>
        <begin position="1"/>
        <end position="759"/>
    </location>
</feature>
<feature type="domain" description="MCM">
    <location>
        <begin position="330"/>
        <end position="536"/>
    </location>
</feature>
<feature type="short sequence motif" description="Arginine finger">
    <location>
        <begin position="511"/>
        <end position="514"/>
    </location>
</feature>
<feature type="binding site" evidence="1">
    <location>
        <position position="370"/>
    </location>
    <ligand>
        <name>ADP</name>
        <dbReference type="ChEBI" id="CHEBI:456216"/>
        <note>ligand shared with MCM3</note>
    </ligand>
</feature>